<name>MSRP_ECO57</name>
<dbReference type="EC" id="1.8.5.-" evidence="1"/>
<dbReference type="EMBL" id="AE005174">
    <property type="protein sequence ID" value="AAG56984.1"/>
    <property type="molecule type" value="Genomic_DNA"/>
</dbReference>
<dbReference type="EMBL" id="BA000007">
    <property type="protein sequence ID" value="BAB36132.1"/>
    <property type="molecule type" value="Genomic_DNA"/>
</dbReference>
<dbReference type="PIR" id="D85815">
    <property type="entry name" value="D85815"/>
</dbReference>
<dbReference type="PIR" id="E90967">
    <property type="entry name" value="E90967"/>
</dbReference>
<dbReference type="RefSeq" id="WP_000740078.1">
    <property type="nucleotide sequence ID" value="NZ_VOAI01000028.1"/>
</dbReference>
<dbReference type="SMR" id="Q8XB74"/>
<dbReference type="STRING" id="155864.Z3063"/>
<dbReference type="DrugBank" id="DB03904">
    <property type="generic name" value="Urea"/>
</dbReference>
<dbReference type="KEGG" id="ece:Z3063"/>
<dbReference type="KEGG" id="ecs:ECs_2709"/>
<dbReference type="PATRIC" id="fig|386585.9.peg.2837"/>
<dbReference type="eggNOG" id="COG2041">
    <property type="taxonomic scope" value="Bacteria"/>
</dbReference>
<dbReference type="HOGENOM" id="CLU_045520_0_0_6"/>
<dbReference type="OMA" id="DWPYVEG"/>
<dbReference type="Proteomes" id="UP000000558">
    <property type="component" value="Chromosome"/>
</dbReference>
<dbReference type="Proteomes" id="UP000002519">
    <property type="component" value="Chromosome"/>
</dbReference>
<dbReference type="GO" id="GO:0042597">
    <property type="term" value="C:periplasmic space"/>
    <property type="evidence" value="ECO:0007669"/>
    <property type="project" value="UniProtKB-SubCell"/>
</dbReference>
<dbReference type="GO" id="GO:0046872">
    <property type="term" value="F:metal ion binding"/>
    <property type="evidence" value="ECO:0007669"/>
    <property type="project" value="UniProtKB-KW"/>
</dbReference>
<dbReference type="GO" id="GO:0043546">
    <property type="term" value="F:molybdopterin cofactor binding"/>
    <property type="evidence" value="ECO:0007669"/>
    <property type="project" value="UniProtKB-UniRule"/>
</dbReference>
<dbReference type="GO" id="GO:0016672">
    <property type="term" value="F:oxidoreductase activity, acting on a sulfur group of donors, quinone or similar compound as acceptor"/>
    <property type="evidence" value="ECO:0007669"/>
    <property type="project" value="UniProtKB-UniRule"/>
</dbReference>
<dbReference type="GO" id="GO:0030091">
    <property type="term" value="P:protein repair"/>
    <property type="evidence" value="ECO:0007669"/>
    <property type="project" value="UniProtKB-UniRule"/>
</dbReference>
<dbReference type="CDD" id="cd02107">
    <property type="entry name" value="YedY_like_Moco"/>
    <property type="match status" value="1"/>
</dbReference>
<dbReference type="FunFam" id="3.90.420.10:FF:000001">
    <property type="entry name" value="Protein-methionine-sulfoxide reductase catalytic subunit MsrP"/>
    <property type="match status" value="1"/>
</dbReference>
<dbReference type="Gene3D" id="3.90.420.10">
    <property type="entry name" value="Oxidoreductase, molybdopterin-binding domain"/>
    <property type="match status" value="1"/>
</dbReference>
<dbReference type="HAMAP" id="MF_01206">
    <property type="entry name" value="MsrP"/>
    <property type="match status" value="1"/>
</dbReference>
<dbReference type="InterPro" id="IPR022867">
    <property type="entry name" value="MsrP"/>
</dbReference>
<dbReference type="InterPro" id="IPR000572">
    <property type="entry name" value="OxRdtase_Mopterin-bd_dom"/>
</dbReference>
<dbReference type="InterPro" id="IPR036374">
    <property type="entry name" value="OxRdtase_Mopterin-bd_sf"/>
</dbReference>
<dbReference type="InterPro" id="IPR006311">
    <property type="entry name" value="TAT_signal"/>
</dbReference>
<dbReference type="NCBIfam" id="NF003767">
    <property type="entry name" value="PRK05363.1"/>
    <property type="match status" value="1"/>
</dbReference>
<dbReference type="PANTHER" id="PTHR43032">
    <property type="entry name" value="PROTEIN-METHIONINE-SULFOXIDE REDUCTASE"/>
    <property type="match status" value="1"/>
</dbReference>
<dbReference type="PANTHER" id="PTHR43032:SF3">
    <property type="entry name" value="PROTEIN-METHIONINE-SULFOXIDE REDUCTASE CATALYTIC SUBUNIT MSRP"/>
    <property type="match status" value="1"/>
</dbReference>
<dbReference type="Pfam" id="PF00174">
    <property type="entry name" value="Oxidored_molyb"/>
    <property type="match status" value="1"/>
</dbReference>
<dbReference type="SUPFAM" id="SSF56524">
    <property type="entry name" value="Oxidoreductase molybdopterin-binding domain"/>
    <property type="match status" value="1"/>
</dbReference>
<dbReference type="PROSITE" id="PS51318">
    <property type="entry name" value="TAT"/>
    <property type="match status" value="1"/>
</dbReference>
<keyword id="KW-0479">Metal-binding</keyword>
<keyword id="KW-0500">Molybdenum</keyword>
<keyword id="KW-0560">Oxidoreductase</keyword>
<keyword id="KW-0574">Periplasm</keyword>
<keyword id="KW-1185">Reference proteome</keyword>
<keyword id="KW-0732">Signal</keyword>
<sequence length="334" mass="37357">MKKNQFLKESDVTAESVFFMKRRQVLKALGISAAALSLPHAAHADLLSWFKGNDRPPAPAGKALEFSKPAAWQNNLPLTPADKVSGYNNFYEFGLDKADPAANAGSLKTDPWTLKISGEVAKPLTLDHDDLTRRFPLEERIYRMRCVEAWSMVVPWIGFPLHKLLALAEPTSNAKYVAFETIYAPEQMPGQQDRFIGGGLKYPYVEGLRLDEAMHPLTLMTVGVYGKALPPQNGAPVRLIVPWKYGFKGIKSIVSIKLTRERPPTTWNLAAPDEYGFYANVNPHVDHPRWSQATERFIGSGGILDVQRQPTLLFNGYADQVASLYRGLDLRENF</sequence>
<reference key="1">
    <citation type="journal article" date="2001" name="Nature">
        <title>Genome sequence of enterohaemorrhagic Escherichia coli O157:H7.</title>
        <authorList>
            <person name="Perna N.T."/>
            <person name="Plunkett G. III"/>
            <person name="Burland V."/>
            <person name="Mau B."/>
            <person name="Glasner J.D."/>
            <person name="Rose D.J."/>
            <person name="Mayhew G.F."/>
            <person name="Evans P.S."/>
            <person name="Gregor J."/>
            <person name="Kirkpatrick H.A."/>
            <person name="Posfai G."/>
            <person name="Hackett J."/>
            <person name="Klink S."/>
            <person name="Boutin A."/>
            <person name="Shao Y."/>
            <person name="Miller L."/>
            <person name="Grotbeck E.J."/>
            <person name="Davis N.W."/>
            <person name="Lim A."/>
            <person name="Dimalanta E.T."/>
            <person name="Potamousis K."/>
            <person name="Apodaca J."/>
            <person name="Anantharaman T.S."/>
            <person name="Lin J."/>
            <person name="Yen G."/>
            <person name="Schwartz D.C."/>
            <person name="Welch R.A."/>
            <person name="Blattner F.R."/>
        </authorList>
    </citation>
    <scope>NUCLEOTIDE SEQUENCE [LARGE SCALE GENOMIC DNA]</scope>
    <source>
        <strain>O157:H7 / EDL933 / ATCC 700927 / EHEC</strain>
    </source>
</reference>
<reference key="2">
    <citation type="journal article" date="2001" name="DNA Res.">
        <title>Complete genome sequence of enterohemorrhagic Escherichia coli O157:H7 and genomic comparison with a laboratory strain K-12.</title>
        <authorList>
            <person name="Hayashi T."/>
            <person name="Makino K."/>
            <person name="Ohnishi M."/>
            <person name="Kurokawa K."/>
            <person name="Ishii K."/>
            <person name="Yokoyama K."/>
            <person name="Han C.-G."/>
            <person name="Ohtsubo E."/>
            <person name="Nakayama K."/>
            <person name="Murata T."/>
            <person name="Tanaka M."/>
            <person name="Tobe T."/>
            <person name="Iida T."/>
            <person name="Takami H."/>
            <person name="Honda T."/>
            <person name="Sasakawa C."/>
            <person name="Ogasawara N."/>
            <person name="Yasunaga T."/>
            <person name="Kuhara S."/>
            <person name="Shiba T."/>
            <person name="Hattori M."/>
            <person name="Shinagawa H."/>
        </authorList>
    </citation>
    <scope>NUCLEOTIDE SEQUENCE [LARGE SCALE GENOMIC DNA]</scope>
    <source>
        <strain>O157:H7 / Sakai / RIMD 0509952 / EHEC</strain>
    </source>
</reference>
<feature type="signal peptide" description="Tat-type signal" evidence="1">
    <location>
        <begin position="1"/>
        <end position="44"/>
    </location>
</feature>
<feature type="chain" id="PRO_0000070686" description="Protein-methionine-sulfoxide reductase catalytic subunit MsrP" evidence="1">
    <location>
        <begin position="45"/>
        <end position="334"/>
    </location>
</feature>
<feature type="binding site" evidence="1">
    <location>
        <position position="88"/>
    </location>
    <ligand>
        <name>Mo-molybdopterin</name>
        <dbReference type="ChEBI" id="CHEBI:71302"/>
    </ligand>
</feature>
<feature type="binding site" evidence="1">
    <location>
        <begin position="91"/>
        <end position="92"/>
    </location>
    <ligand>
        <name>Mo-molybdopterin</name>
        <dbReference type="ChEBI" id="CHEBI:71302"/>
    </ligand>
</feature>
<feature type="binding site" evidence="1">
    <location>
        <position position="146"/>
    </location>
    <ligand>
        <name>Mo-molybdopterin</name>
        <dbReference type="ChEBI" id="CHEBI:71302"/>
    </ligand>
    <ligandPart>
        <name>Mo</name>
        <dbReference type="ChEBI" id="CHEBI:28685"/>
    </ligandPart>
</feature>
<feature type="binding site" evidence="1">
    <location>
        <position position="181"/>
    </location>
    <ligand>
        <name>Mo-molybdopterin</name>
        <dbReference type="ChEBI" id="CHEBI:71302"/>
    </ligand>
</feature>
<feature type="binding site" evidence="1">
    <location>
        <position position="233"/>
    </location>
    <ligand>
        <name>Mo-molybdopterin</name>
        <dbReference type="ChEBI" id="CHEBI:71302"/>
    </ligand>
</feature>
<feature type="binding site" evidence="1">
    <location>
        <position position="238"/>
    </location>
    <ligand>
        <name>Mo-molybdopterin</name>
        <dbReference type="ChEBI" id="CHEBI:71302"/>
    </ligand>
</feature>
<feature type="binding site" evidence="1">
    <location>
        <begin position="249"/>
        <end position="251"/>
    </location>
    <ligand>
        <name>Mo-molybdopterin</name>
        <dbReference type="ChEBI" id="CHEBI:71302"/>
    </ligand>
</feature>
<comment type="function">
    <text evidence="1">Part of the MsrPQ system that repairs oxidized periplasmic proteins containing methionine sulfoxide residues (Met-O), using respiratory chain electrons. Thus protects these proteins from oxidative-stress damage caused by reactive species of oxygen and chlorine generated by the host defense mechanisms. MsrPQ is essential for the maintenance of envelope integrity under bleach stress, rescuing a wide series of structurally unrelated periplasmic proteins from methionine oxidation, including the primary periplasmic chaperone SurA and the lipoprotein Pal. The catalytic subunit MsrP is non-stereospecific, being able to reduce both (R-) and (S-) diastereoisomers of methionine sulfoxide.</text>
</comment>
<comment type="catalytic activity">
    <reaction evidence="1">
        <text>L-methionyl-[protein] + a quinone + H2O = L-methionyl-(S)-S-oxide-[protein] + a quinol</text>
        <dbReference type="Rhea" id="RHEA:51292"/>
        <dbReference type="Rhea" id="RHEA-COMP:12313"/>
        <dbReference type="Rhea" id="RHEA-COMP:12315"/>
        <dbReference type="ChEBI" id="CHEBI:15377"/>
        <dbReference type="ChEBI" id="CHEBI:16044"/>
        <dbReference type="ChEBI" id="CHEBI:24646"/>
        <dbReference type="ChEBI" id="CHEBI:44120"/>
        <dbReference type="ChEBI" id="CHEBI:132124"/>
    </reaction>
</comment>
<comment type="catalytic activity">
    <reaction evidence="1">
        <text>L-methionyl-[protein] + a quinone + H2O = L-methionyl-(R)-S-oxide-[protein] + a quinol</text>
        <dbReference type="Rhea" id="RHEA:51296"/>
        <dbReference type="Rhea" id="RHEA-COMP:12313"/>
        <dbReference type="Rhea" id="RHEA-COMP:12314"/>
        <dbReference type="ChEBI" id="CHEBI:15377"/>
        <dbReference type="ChEBI" id="CHEBI:16044"/>
        <dbReference type="ChEBI" id="CHEBI:24646"/>
        <dbReference type="ChEBI" id="CHEBI:45764"/>
        <dbReference type="ChEBI" id="CHEBI:132124"/>
    </reaction>
</comment>
<comment type="cofactor">
    <cofactor evidence="1">
        <name>Mo-molybdopterin</name>
        <dbReference type="ChEBI" id="CHEBI:71302"/>
    </cofactor>
    <text evidence="1">Binds 1 Mo-molybdopterin (Mo-MPT) cofactor per subunit.</text>
</comment>
<comment type="subunit">
    <text evidence="1">Heterodimer of a catalytic subunit (MsrP) and a heme-binding subunit (MsrQ).</text>
</comment>
<comment type="subcellular location">
    <subcellularLocation>
        <location evidence="1">Periplasm</location>
    </subcellularLocation>
    <text evidence="1">Is attached to the inner membrane when interacting with the MsrQ subunit.</text>
</comment>
<comment type="PTM">
    <text evidence="1">Predicted to be exported by the Tat system. The position of the signal peptide cleavage has not been experimentally proven.</text>
</comment>
<comment type="similarity">
    <text evidence="1">Belongs to the MsrP family.</text>
</comment>
<accession>Q8XB74</accession>
<gene>
    <name evidence="1" type="primary">msrP</name>
    <name type="ordered locus">Z3063</name>
    <name type="ordered locus">ECs2709</name>
</gene>
<proteinExistence type="inferred from homology"/>
<evidence type="ECO:0000255" key="1">
    <source>
        <dbReference type="HAMAP-Rule" id="MF_01206"/>
    </source>
</evidence>
<protein>
    <recommendedName>
        <fullName evidence="1">Protein-methionine-sulfoxide reductase catalytic subunit MsrP</fullName>
        <ecNumber evidence="1">1.8.5.-</ecNumber>
    </recommendedName>
</protein>
<organism>
    <name type="scientific">Escherichia coli O157:H7</name>
    <dbReference type="NCBI Taxonomy" id="83334"/>
    <lineage>
        <taxon>Bacteria</taxon>
        <taxon>Pseudomonadati</taxon>
        <taxon>Pseudomonadota</taxon>
        <taxon>Gammaproteobacteria</taxon>
        <taxon>Enterobacterales</taxon>
        <taxon>Enterobacteriaceae</taxon>
        <taxon>Escherichia</taxon>
    </lineage>
</organism>